<sequence>MMTPENDEEQTSVFSATVYGDKIQGKNKRKRVIGLCIRISMVISLLSMITMSAFLIVRLNQCMSANKAAITDSAVAVAAASSTHRKVVSSTTQYDHKESCNGLYYQGSCYILHSDYKSFEDAKANCAAESSTLPNKSDVLTTWLIDYVEDTWGSDGNPITKTTSDYQDSDVSQEVRKYFCT</sequence>
<gene>
    <name type="primary">OPG161</name>
    <name type="ORF">MPXVgp145</name>
</gene>
<organism>
    <name type="scientific">Monkeypox virus</name>
    <dbReference type="NCBI Taxonomy" id="10244"/>
    <lineage>
        <taxon>Viruses</taxon>
        <taxon>Varidnaviria</taxon>
        <taxon>Bamfordvirae</taxon>
        <taxon>Nucleocytoviricota</taxon>
        <taxon>Pokkesviricetes</taxon>
        <taxon>Chitovirales</taxon>
        <taxon>Poxviridae</taxon>
        <taxon>Chordopoxvirinae</taxon>
        <taxon>Orthopoxvirus</taxon>
    </lineage>
</organism>
<name>PG161_MONPV</name>
<reference key="1">
    <citation type="journal article" date="2022" name="J. Infect. Dis.">
        <title>Exportation of Monkeypox virus from the African continent.</title>
        <authorList>
            <person name="Mauldin M.R."/>
            <person name="McCollum A.M."/>
            <person name="Nakazawa Y.J."/>
            <person name="Mandra A."/>
            <person name="Whitehouse E.R."/>
            <person name="Davidson W."/>
            <person name="Zhao H."/>
            <person name="Gao J."/>
            <person name="Li Y."/>
            <person name="Doty J."/>
            <person name="Yinka-Ogunleye A."/>
            <person name="Akinpelu A."/>
            <person name="Aruna O."/>
            <person name="Naidoo D."/>
            <person name="Lewandowski K."/>
            <person name="Afrough B."/>
            <person name="Graham V."/>
            <person name="Aarons E."/>
            <person name="Hewson R."/>
            <person name="Vipond R."/>
            <person name="Dunning J."/>
            <person name="Chand M."/>
            <person name="Brown C."/>
            <person name="Cohen-Gihon I."/>
            <person name="Erez N."/>
            <person name="Shifman O."/>
            <person name="Israeli O."/>
            <person name="Sharon M."/>
            <person name="Schwartz E."/>
            <person name="Beth-Din A."/>
            <person name="Zvi A."/>
            <person name="Mak T.M."/>
            <person name="Ng Y.K."/>
            <person name="Cui L."/>
            <person name="Lin R.T.P."/>
            <person name="Olson V.A."/>
            <person name="Brooks T."/>
            <person name="Paran N."/>
            <person name="Ihekweazu C."/>
            <person name="Reynolds M.G."/>
        </authorList>
    </citation>
    <scope>NUCLEOTIDE SEQUENCE [LARGE SCALE GENOMIC DNA]</scope>
    <source>
        <strain>MPXV-M5312_HM12_Rivers</strain>
    </source>
</reference>
<comment type="function">
    <text evidence="1">Forms a complex with OPG162 and OPG190 to coordinate the incorporation of OPG164 into wrapped enveloped virion (EV) membranes and, subsequently, the production of actin tails. Therefore plays an essential role in efficient cell-to-cell spread of viral particles.</text>
</comment>
<comment type="subunit">
    <text evidence="1">Homodimer, disulfide-linked. Interacts with protein OPG190. Interacts (via C-terminus) with protein OPG164. Interacts with OPG162.</text>
</comment>
<comment type="subcellular location">
    <subcellularLocation>
        <location evidence="1">Virion membrane</location>
        <topology evidence="1">Single-pass type II membrane protein</topology>
    </subcellularLocation>
    <subcellularLocation>
        <location evidence="1">Host membrane</location>
        <topology evidence="1">Single-pass type II membrane protein</topology>
    </subcellularLocation>
    <text evidence="1">Component of the enveloped virion (EV) membrane.</text>
</comment>
<comment type="similarity">
    <text evidence="4">Belongs to the orthopoxvirus OPG161 family.</text>
</comment>
<feature type="chain" id="PRO_0000457544" description="Protein OPG161">
    <location>
        <begin position="1"/>
        <end position="181"/>
    </location>
</feature>
<feature type="topological domain" description="Intravirion" evidence="1">
    <location>
        <begin position="1"/>
        <end position="34"/>
    </location>
</feature>
<feature type="transmembrane region" description="Helical" evidence="2">
    <location>
        <begin position="35"/>
        <end position="57"/>
    </location>
</feature>
<feature type="topological domain" description="Virion surface" evidence="1">
    <location>
        <begin position="58"/>
        <end position="181"/>
    </location>
</feature>
<feature type="glycosylation site" description="N-linked (GlcNAc...) asparagine; by host" evidence="3">
    <location>
        <position position="135"/>
    </location>
</feature>
<feature type="disulfide bond" description="Interchain" evidence="1">
    <location>
        <position position="62"/>
    </location>
</feature>
<protein>
    <recommendedName>
        <fullName>Protein OPG161</fullName>
    </recommendedName>
</protein>
<dbReference type="EMBL" id="MT903340">
    <property type="protein sequence ID" value="QNP13015.1"/>
    <property type="molecule type" value="Genomic_DNA"/>
</dbReference>
<dbReference type="RefSeq" id="YP_010377142.1">
    <property type="nucleotide sequence ID" value="NC_063383.1"/>
</dbReference>
<dbReference type="SMR" id="A0A7H0DND2"/>
<dbReference type="GeneID" id="72551555"/>
<dbReference type="Proteomes" id="UP000516359">
    <property type="component" value="Genome"/>
</dbReference>
<dbReference type="GO" id="GO:0033644">
    <property type="term" value="C:host cell membrane"/>
    <property type="evidence" value="ECO:0007669"/>
    <property type="project" value="UniProtKB-SubCell"/>
</dbReference>
<dbReference type="GO" id="GO:0016020">
    <property type="term" value="C:membrane"/>
    <property type="evidence" value="ECO:0007669"/>
    <property type="project" value="UniProtKB-KW"/>
</dbReference>
<dbReference type="GO" id="GO:0055036">
    <property type="term" value="C:virion membrane"/>
    <property type="evidence" value="ECO:0007669"/>
    <property type="project" value="UniProtKB-SubCell"/>
</dbReference>
<dbReference type="Gene3D" id="3.10.100.10">
    <property type="entry name" value="Mannose-Binding Protein A, subunit A"/>
    <property type="match status" value="1"/>
</dbReference>
<dbReference type="InterPro" id="IPR016186">
    <property type="entry name" value="C-type_lectin-like/link_sf"/>
</dbReference>
<dbReference type="InterPro" id="IPR009238">
    <property type="entry name" value="Chordopox_A33R"/>
</dbReference>
<dbReference type="InterPro" id="IPR016187">
    <property type="entry name" value="CTDL_fold"/>
</dbReference>
<dbReference type="Pfam" id="PF05966">
    <property type="entry name" value="Chordopox_A33R"/>
    <property type="match status" value="1"/>
</dbReference>
<dbReference type="SUPFAM" id="SSF56436">
    <property type="entry name" value="C-type lectin-like"/>
    <property type="match status" value="1"/>
</dbReference>
<keyword id="KW-1015">Disulfide bond</keyword>
<keyword id="KW-0325">Glycoprotein</keyword>
<keyword id="KW-1043">Host membrane</keyword>
<keyword id="KW-0472">Membrane</keyword>
<keyword id="KW-1185">Reference proteome</keyword>
<keyword id="KW-0735">Signal-anchor</keyword>
<keyword id="KW-0812">Transmembrane</keyword>
<keyword id="KW-1133">Transmembrane helix</keyword>
<keyword id="KW-0946">Virion</keyword>
<accession>A0A7H0DND2</accession>
<organismHost>
    <name type="scientific">Cynomys gunnisoni</name>
    <name type="common">Gunnison's prairie dog</name>
    <name type="synonym">Spermophilus gunnisoni</name>
    <dbReference type="NCBI Taxonomy" id="45479"/>
</organismHost>
<organismHost>
    <name type="scientific">Cynomys leucurus</name>
    <name type="common">White-tailed prairie dog</name>
    <dbReference type="NCBI Taxonomy" id="99825"/>
</organismHost>
<organismHost>
    <name type="scientific">Cynomys ludovicianus</name>
    <name type="common">Black-tailed prairie dog</name>
    <dbReference type="NCBI Taxonomy" id="45480"/>
</organismHost>
<organismHost>
    <name type="scientific">Cynomys mexicanus</name>
    <name type="common">Mexican prairie dog</name>
    <dbReference type="NCBI Taxonomy" id="99826"/>
</organismHost>
<organismHost>
    <name type="scientific">Cynomys parvidens</name>
    <name type="common">Utah prairie dog</name>
    <dbReference type="NCBI Taxonomy" id="99827"/>
</organismHost>
<organismHost>
    <name type="scientific">Gliridae</name>
    <name type="common">dormice</name>
    <dbReference type="NCBI Taxonomy" id="30650"/>
</organismHost>
<organismHost>
    <name type="scientific">Heliosciurus ruwenzorii</name>
    <name type="common">Ruwenzori sun squirrel</name>
    <dbReference type="NCBI Taxonomy" id="226685"/>
</organismHost>
<organismHost>
    <name type="scientific">Homo sapiens</name>
    <name type="common">Human</name>
    <dbReference type="NCBI Taxonomy" id="9606"/>
</organismHost>
<organismHost>
    <name type="scientific">Mus musculus</name>
    <name type="common">Mouse</name>
    <dbReference type="NCBI Taxonomy" id="10090"/>
</organismHost>
<proteinExistence type="inferred from homology"/>
<evidence type="ECO:0000250" key="1">
    <source>
        <dbReference type="UniProtKB" id="P68617"/>
    </source>
</evidence>
<evidence type="ECO:0000255" key="2"/>
<evidence type="ECO:0000255" key="3">
    <source>
        <dbReference type="PROSITE-ProRule" id="PRU00498"/>
    </source>
</evidence>
<evidence type="ECO:0000305" key="4"/>